<organism>
    <name type="scientific">Alternaria brassicicola</name>
    <name type="common">Dark leaf spot agent</name>
    <dbReference type="NCBI Taxonomy" id="29001"/>
    <lineage>
        <taxon>Eukaryota</taxon>
        <taxon>Fungi</taxon>
        <taxon>Dikarya</taxon>
        <taxon>Ascomycota</taxon>
        <taxon>Pezizomycotina</taxon>
        <taxon>Dothideomycetes</taxon>
        <taxon>Pleosporomycetidae</taxon>
        <taxon>Pleosporales</taxon>
        <taxon>Pleosporineae</taxon>
        <taxon>Pleosporaceae</taxon>
        <taxon>Alternaria</taxon>
        <taxon>Alternaria sect. Brassicicola</taxon>
    </lineage>
</organism>
<accession>C9K2Q2</accession>
<comment type="function">
    <text evidence="2 3 4 8">16-O-methyltransferase; part of the gene cluster that mediates the biosynthesis of the diterpene glucoside brassicicene C (PubMed:19097780). In the first step of the brassicicene C biosynthesis, the bifunctional diterpene synthase bsc8 that possesses both prenyl transferase and terpene cyclase activity, converts isopentenyl diphosphate and dimethylallyl diphosphate into geranylgeranyl diphosphate (GGDP) that is further converted into fusicocca-2,10(14)-diene, the first precursor for brassicicene C (PubMed:19097780). Fusicocca-2,10(14)-diene is then substrate of cytochrome P450 monooxygenase bsc1 for hydroxylation at the C-8 position (PubMed:19700326). Oxidation at C-16 position to aldehyde is then catalyzed by the cytochrome P450 monooyxygenase bsc7, yielding fusicocca-2,10(14)-diene-8-beta,16-diol (PubMed:19700326). Follows the isomerization of the double bond and reduction of aldehyde to alcohol catalyzed by the short-chain dehydrogenase/reductase bsc3 to yield the diol compound fusicocca-1,10(14)-diene-8 beta,16-diol (Probable). The next step is the oxidation at the C-3 position of fusicocca-2,10(14)-diene-8-beta,16-diol catalyzed by the alpha-ketoglutarate dependent dioxygenase bsc9, to produce a triol compound (PubMed:21299202). Methylation of the hydroxy group at position 16 is performed by the methyltransferase bsc6 (PubMed:19097780). 16-O-methylation is followed by oxidation at the C-13 position to ketone and an alkyl shift of the methyl group leads to brassicicene C (Probable). Although the probable acetyltransferase bsc4 is included in the gene cluster, no acetylation reactions are necessary for brassicicene C biosynthesis. However, the fact that brassicicene E, which is a structurally related compound having an acetoxy group at position 12, was previously isolated from another strain of A.brassicicola suggests that the ATCC 96836 strain might also produce a small amount of brassicicene E (Probable).</text>
</comment>
<comment type="cofactor">
    <cofactor evidence="2">
        <name>S-adenosyl-L-methionine</name>
        <dbReference type="ChEBI" id="CHEBI:59789"/>
    </cofactor>
</comment>
<comment type="pathway">
    <text evidence="2">Mycotoxin biosynthesis.</text>
</comment>
<comment type="similarity">
    <text evidence="7">Belongs to the class I-like SAM-binding methyltransferase superfamily. Cation-independent O-methyltransferase family.</text>
</comment>
<reference key="1">
    <citation type="journal article" date="2009" name="Bioorg. Med. Chem. Lett.">
        <title>Identification and functional analysis of brassicicene C biosynthetic gene cluster in Alternaria brassicicola.</title>
        <authorList>
            <person name="Minami A."/>
            <person name="Tajima N."/>
            <person name="Higuchi Y."/>
            <person name="Toyomasu T."/>
            <person name="Sassa T."/>
            <person name="Kato N."/>
            <person name="Dairi T."/>
        </authorList>
    </citation>
    <scope>NUCLEOTIDE SEQUENCE [MRNA]</scope>
    <scope>FUNCTION</scope>
    <scope>CATALYTIC ACTIVITY</scope>
    <scope>COFACTOR</scope>
    <scope>PATHWAY</scope>
    <source>
        <strain>ATCC 96836</strain>
    </source>
</reference>
<reference key="2">
    <citation type="journal article" date="2009" name="Bioorg. Med. Chem. Lett.">
        <title>Functional analyses of cytochrome P450 genes responsible for the early steps of brassicicene C biosynthesis.</title>
        <authorList>
            <person name="Hashimoto M."/>
            <person name="Higuchi Y."/>
            <person name="Takahashi S."/>
            <person name="Osada H."/>
            <person name="Sakaki T."/>
            <person name="Toyomasu T."/>
            <person name="Sassa T."/>
            <person name="Kato N."/>
            <person name="Dairi T."/>
        </authorList>
    </citation>
    <scope>FUNCTION</scope>
</reference>
<reference key="3">
    <citation type="journal article" date="2011" name="J. Am. Chem. Soc.">
        <title>Dioxygenases, key enzymes to determine the aglycon structures of fusicoccin and brassicicene, diterpene compounds produced by fungi.</title>
        <authorList>
            <person name="Ono Y."/>
            <person name="Minami A."/>
            <person name="Noike M."/>
            <person name="Higuchi Y."/>
            <person name="Toyomasu T."/>
            <person name="Sassa T."/>
            <person name="Kato N."/>
            <person name="Dairi T."/>
        </authorList>
    </citation>
    <scope>FUNCTION</scope>
</reference>
<keyword id="KW-0489">Methyltransferase</keyword>
<keyword id="KW-0949">S-adenosyl-L-methionine</keyword>
<keyword id="KW-0808">Transferase</keyword>
<protein>
    <recommendedName>
        <fullName evidence="5">16-O-methyltransferase bsc6</fullName>
        <ecNumber evidence="2">2.1.1.-</ecNumber>
    </recommendedName>
    <alternativeName>
        <fullName evidence="6">Brassicicene C biosynthetic gene cluster protein 6</fullName>
    </alternativeName>
</protein>
<gene>
    <name evidence="5" type="primary">bsc6</name>
    <name evidence="6" type="synonym">orf6</name>
</gene>
<dbReference type="EC" id="2.1.1.-" evidence="2"/>
<dbReference type="EMBL" id="AB465603">
    <property type="protein sequence ID" value="BAI44848.1"/>
    <property type="molecule type" value="mRNA"/>
</dbReference>
<dbReference type="SMR" id="C9K2Q2"/>
<dbReference type="BioCyc" id="MetaCyc:MONOMER-18717"/>
<dbReference type="GO" id="GO:0008171">
    <property type="term" value="F:O-methyltransferase activity"/>
    <property type="evidence" value="ECO:0007669"/>
    <property type="project" value="InterPro"/>
</dbReference>
<dbReference type="GO" id="GO:0046983">
    <property type="term" value="F:protein dimerization activity"/>
    <property type="evidence" value="ECO:0007669"/>
    <property type="project" value="InterPro"/>
</dbReference>
<dbReference type="GO" id="GO:0032259">
    <property type="term" value="P:methylation"/>
    <property type="evidence" value="ECO:0007669"/>
    <property type="project" value="UniProtKB-KW"/>
</dbReference>
<dbReference type="GO" id="GO:0044550">
    <property type="term" value="P:secondary metabolite biosynthetic process"/>
    <property type="evidence" value="ECO:0007669"/>
    <property type="project" value="UniProtKB-ARBA"/>
</dbReference>
<dbReference type="Gene3D" id="3.40.50.150">
    <property type="entry name" value="Vaccinia Virus protein VP39"/>
    <property type="match status" value="1"/>
</dbReference>
<dbReference type="Gene3D" id="1.10.10.10">
    <property type="entry name" value="Winged helix-like DNA-binding domain superfamily/Winged helix DNA-binding domain"/>
    <property type="match status" value="1"/>
</dbReference>
<dbReference type="InterPro" id="IPR016461">
    <property type="entry name" value="COMT-like"/>
</dbReference>
<dbReference type="InterPro" id="IPR001077">
    <property type="entry name" value="O_MeTrfase_dom"/>
</dbReference>
<dbReference type="InterPro" id="IPR012967">
    <property type="entry name" value="Plant_O-MeTrfase_dimerisation"/>
</dbReference>
<dbReference type="InterPro" id="IPR029063">
    <property type="entry name" value="SAM-dependent_MTases_sf"/>
</dbReference>
<dbReference type="InterPro" id="IPR036388">
    <property type="entry name" value="WH-like_DNA-bd_sf"/>
</dbReference>
<dbReference type="InterPro" id="IPR036390">
    <property type="entry name" value="WH_DNA-bd_sf"/>
</dbReference>
<dbReference type="PANTHER" id="PTHR43712:SF1">
    <property type="entry name" value="HYPOTHETICAL O-METHYLTRANSFERASE (EUROFUNG)-RELATED"/>
    <property type="match status" value="1"/>
</dbReference>
<dbReference type="PANTHER" id="PTHR43712">
    <property type="entry name" value="PUTATIVE (AFU_ORTHOLOGUE AFUA_4G14580)-RELATED"/>
    <property type="match status" value="1"/>
</dbReference>
<dbReference type="Pfam" id="PF08100">
    <property type="entry name" value="Dimerisation"/>
    <property type="match status" value="1"/>
</dbReference>
<dbReference type="Pfam" id="PF00891">
    <property type="entry name" value="Methyltransf_2"/>
    <property type="match status" value="1"/>
</dbReference>
<dbReference type="PIRSF" id="PIRSF005739">
    <property type="entry name" value="O-mtase"/>
    <property type="match status" value="1"/>
</dbReference>
<dbReference type="SUPFAM" id="SSF53335">
    <property type="entry name" value="S-adenosyl-L-methionine-dependent methyltransferases"/>
    <property type="match status" value="1"/>
</dbReference>
<dbReference type="SUPFAM" id="SSF46785">
    <property type="entry name" value="Winged helix' DNA-binding domain"/>
    <property type="match status" value="1"/>
</dbReference>
<dbReference type="PROSITE" id="PS51683">
    <property type="entry name" value="SAM_OMT_II"/>
    <property type="match status" value="1"/>
</dbReference>
<name>BSC6_ALTBR</name>
<evidence type="ECO:0000255" key="1">
    <source>
        <dbReference type="PROSITE-ProRule" id="PRU01020"/>
    </source>
</evidence>
<evidence type="ECO:0000269" key="2">
    <source>
    </source>
</evidence>
<evidence type="ECO:0000269" key="3">
    <source>
    </source>
</evidence>
<evidence type="ECO:0000269" key="4">
    <source>
    </source>
</evidence>
<evidence type="ECO:0000303" key="5">
    <source>
    </source>
</evidence>
<evidence type="ECO:0000303" key="6">
    <source>
    </source>
</evidence>
<evidence type="ECO:0000305" key="7"/>
<evidence type="ECO:0000305" key="8">
    <source>
    </source>
</evidence>
<sequence>MAVQETDLDKQLLQLSIQVADLAARTDSRGSQKIQDFLIKTQQSLESPWETLMRYYDLDFQHVAIRIGCDMQVFTTLTTADKPMKLQDIANVNGASERLLGRVLRYLASINTIEEVGKDTFEANHITRTLSKPGIEGGIRLSSACQRPTNSALPDLLVERGFQDITSATETAFNKAWASREPFFTWVRSQPKIFEYLRLALDVQFREDWLNAFPLESHLGDFASRADPEKVLFVDVGGNLGIQCRGLKAKFPHLSGRIILEDLQETIDVALALEGVETLAQDYLTEQKVKGAKFYYYRNIFHDNPDDRCRLILDALKPAMEESSLLLIDDKVLLNQGSHRHVTMLDLAMMAQVASHERTRAQWQALLEGAGWKIEDIFQYSHEYDSIIVVKPAAQNA</sequence>
<proteinExistence type="evidence at protein level"/>
<feature type="chain" id="PRO_0000445459" description="16-O-methyltransferase bsc6">
    <location>
        <begin position="1"/>
        <end position="397"/>
    </location>
</feature>
<feature type="active site" description="Proton acceptor" evidence="1">
    <location>
        <position position="302"/>
    </location>
</feature>
<feature type="binding site" evidence="1">
    <location>
        <position position="262"/>
    </location>
    <ligand>
        <name>S-adenosyl-L-methionine</name>
        <dbReference type="ChEBI" id="CHEBI:59789"/>
    </ligand>
</feature>